<dbReference type="EMBL" id="EF489041">
    <property type="protein sequence ID" value="ABO36734.1"/>
    <property type="molecule type" value="Genomic_DNA"/>
</dbReference>
<dbReference type="RefSeq" id="YP_001109530.1">
    <property type="nucleotide sequence ID" value="NC_009143.1"/>
</dbReference>
<dbReference type="SMR" id="A4GYT9"/>
<dbReference type="FunCoup" id="A4GYT9">
    <property type="interactions" value="48"/>
</dbReference>
<dbReference type="STRING" id="3694.A4GYT9"/>
<dbReference type="EnsemblPlants" id="Potri.011G113700.2.v4.1">
    <property type="protein sequence ID" value="Potri.011G113700.2.v4.1"/>
    <property type="gene ID" value="Potri.011G113700.v4.1"/>
</dbReference>
<dbReference type="EnsemblPlants" id="Potri.019G028300.1.v4.1">
    <property type="protein sequence ID" value="Potri.019G028300.1.v4.1"/>
    <property type="gene ID" value="Potri.019G028300.v4.1"/>
</dbReference>
<dbReference type="GeneID" id="4929701"/>
<dbReference type="Gramene" id="Potri.011G113700.2.v4.1">
    <property type="protein sequence ID" value="Potri.011G113700.2.v4.1"/>
    <property type="gene ID" value="Potri.011G113700.v4.1"/>
</dbReference>
<dbReference type="Gramene" id="Potri.019G028300.1.v4.1">
    <property type="protein sequence ID" value="Potri.019G028300.1.v4.1"/>
    <property type="gene ID" value="Potri.019G028300.v4.1"/>
</dbReference>
<dbReference type="KEGG" id="pop:4929701"/>
<dbReference type="eggNOG" id="ENOG502S8EW">
    <property type="taxonomic scope" value="Eukaryota"/>
</dbReference>
<dbReference type="InParanoid" id="A4GYT9"/>
<dbReference type="OrthoDB" id="1860403at2759"/>
<dbReference type="Proteomes" id="UP000006729">
    <property type="component" value="Chloroplast"/>
</dbReference>
<dbReference type="ExpressionAtlas" id="A4GYT9">
    <property type="expression patterns" value="baseline and differential"/>
</dbReference>
<dbReference type="GO" id="GO:0009535">
    <property type="term" value="C:chloroplast thylakoid membrane"/>
    <property type="evidence" value="ECO:0007669"/>
    <property type="project" value="UniProtKB-SubCell"/>
</dbReference>
<dbReference type="GO" id="GO:0015979">
    <property type="term" value="P:photosynthesis"/>
    <property type="evidence" value="ECO:0007669"/>
    <property type="project" value="InterPro"/>
</dbReference>
<dbReference type="HAMAP" id="MF_00293">
    <property type="entry name" value="PSII_PsbN"/>
    <property type="match status" value="1"/>
</dbReference>
<dbReference type="InterPro" id="IPR003398">
    <property type="entry name" value="PSII_PsbN"/>
</dbReference>
<dbReference type="PANTHER" id="PTHR35326">
    <property type="entry name" value="PROTEIN PSBN"/>
    <property type="match status" value="1"/>
</dbReference>
<dbReference type="PANTHER" id="PTHR35326:SF3">
    <property type="entry name" value="PROTEIN PSBN"/>
    <property type="match status" value="1"/>
</dbReference>
<dbReference type="Pfam" id="PF02468">
    <property type="entry name" value="PsbN"/>
    <property type="match status" value="1"/>
</dbReference>
<organism>
    <name type="scientific">Populus trichocarpa</name>
    <name type="common">Western balsam poplar</name>
    <name type="synonym">Populus balsamifera subsp. trichocarpa</name>
    <dbReference type="NCBI Taxonomy" id="3694"/>
    <lineage>
        <taxon>Eukaryota</taxon>
        <taxon>Viridiplantae</taxon>
        <taxon>Streptophyta</taxon>
        <taxon>Embryophyta</taxon>
        <taxon>Tracheophyta</taxon>
        <taxon>Spermatophyta</taxon>
        <taxon>Magnoliopsida</taxon>
        <taxon>eudicotyledons</taxon>
        <taxon>Gunneridae</taxon>
        <taxon>Pentapetalae</taxon>
        <taxon>rosids</taxon>
        <taxon>fabids</taxon>
        <taxon>Malpighiales</taxon>
        <taxon>Salicaceae</taxon>
        <taxon>Saliceae</taxon>
        <taxon>Populus</taxon>
    </lineage>
</organism>
<gene>
    <name evidence="1" type="primary">psbN</name>
    <name type="ordered locus">Poptr_cp051</name>
</gene>
<keyword id="KW-0150">Chloroplast</keyword>
<keyword id="KW-0472">Membrane</keyword>
<keyword id="KW-0934">Plastid</keyword>
<keyword id="KW-1185">Reference proteome</keyword>
<keyword id="KW-0793">Thylakoid</keyword>
<keyword id="KW-0812">Transmembrane</keyword>
<keyword id="KW-1133">Transmembrane helix</keyword>
<accession>A4GYT9</accession>
<evidence type="ECO:0000255" key="1">
    <source>
        <dbReference type="HAMAP-Rule" id="MF_00293"/>
    </source>
</evidence>
<feature type="chain" id="PRO_0000362212" description="Protein PsbN">
    <location>
        <begin position="1"/>
        <end position="43"/>
    </location>
</feature>
<feature type="transmembrane region" description="Helical" evidence="1">
    <location>
        <begin position="5"/>
        <end position="27"/>
    </location>
</feature>
<protein>
    <recommendedName>
        <fullName evidence="1">Protein PsbN</fullName>
    </recommendedName>
</protein>
<comment type="function">
    <text evidence="1">May play a role in photosystem I and II biogenesis.</text>
</comment>
<comment type="subcellular location">
    <subcellularLocation>
        <location evidence="1">Plastid</location>
        <location evidence="1">Chloroplast thylakoid membrane</location>
        <topology evidence="1">Single-pass membrane protein</topology>
    </subcellularLocation>
</comment>
<comment type="similarity">
    <text evidence="1">Belongs to the PsbN family.</text>
</comment>
<comment type="caution">
    <text evidence="1">Originally thought to be a component of PSII; based on experiments in Synechocystis, N.tabacum and barley, and its absence from PSII in T.elongatus and T.vulcanus, this is probably not true.</text>
</comment>
<name>PSBN_POPTR</name>
<reference key="1">
    <citation type="journal article" date="2006" name="Science">
        <title>The genome of black cottonwood, Populus trichocarpa (Torr. &amp; Gray).</title>
        <authorList>
            <person name="Tuskan G.A."/>
            <person name="Difazio S."/>
            <person name="Jansson S."/>
            <person name="Bohlmann J."/>
            <person name="Grigoriev I."/>
            <person name="Hellsten U."/>
            <person name="Putnam N."/>
            <person name="Ralph S."/>
            <person name="Rombauts S."/>
            <person name="Salamov A."/>
            <person name="Schein J."/>
            <person name="Sterck L."/>
            <person name="Aerts A."/>
            <person name="Bhalerao R.R."/>
            <person name="Bhalerao R.P."/>
            <person name="Blaudez D."/>
            <person name="Boerjan W."/>
            <person name="Brun A."/>
            <person name="Brunner A."/>
            <person name="Busov V."/>
            <person name="Campbell M."/>
            <person name="Carlson J."/>
            <person name="Chalot M."/>
            <person name="Chapman J."/>
            <person name="Chen G.-L."/>
            <person name="Cooper D."/>
            <person name="Coutinho P.M."/>
            <person name="Couturier J."/>
            <person name="Covert S."/>
            <person name="Cronk Q."/>
            <person name="Cunningham R."/>
            <person name="Davis J."/>
            <person name="Degroeve S."/>
            <person name="Dejardin A."/>
            <person name="dePamphilis C.W."/>
            <person name="Detter J."/>
            <person name="Dirks B."/>
            <person name="Dubchak I."/>
            <person name="Duplessis S."/>
            <person name="Ehlting J."/>
            <person name="Ellis B."/>
            <person name="Gendler K."/>
            <person name="Goodstein D."/>
            <person name="Gribskov M."/>
            <person name="Grimwood J."/>
            <person name="Groover A."/>
            <person name="Gunter L."/>
            <person name="Hamberger B."/>
            <person name="Heinze B."/>
            <person name="Helariutta Y."/>
            <person name="Henrissat B."/>
            <person name="Holligan D."/>
            <person name="Holt R."/>
            <person name="Huang W."/>
            <person name="Islam-Faridi N."/>
            <person name="Jones S."/>
            <person name="Jones-Rhoades M."/>
            <person name="Jorgensen R."/>
            <person name="Joshi C."/>
            <person name="Kangasjaervi J."/>
            <person name="Karlsson J."/>
            <person name="Kelleher C."/>
            <person name="Kirkpatrick R."/>
            <person name="Kirst M."/>
            <person name="Kohler A."/>
            <person name="Kalluri U."/>
            <person name="Larimer F."/>
            <person name="Leebens-Mack J."/>
            <person name="Leple J.-C."/>
            <person name="Locascio P."/>
            <person name="Lou Y."/>
            <person name="Lucas S."/>
            <person name="Martin F."/>
            <person name="Montanini B."/>
            <person name="Napoli C."/>
            <person name="Nelson D.R."/>
            <person name="Nelson C."/>
            <person name="Nieminen K."/>
            <person name="Nilsson O."/>
            <person name="Pereda V."/>
            <person name="Peter G."/>
            <person name="Philippe R."/>
            <person name="Pilate G."/>
            <person name="Poliakov A."/>
            <person name="Razumovskaya J."/>
            <person name="Richardson P."/>
            <person name="Rinaldi C."/>
            <person name="Ritland K."/>
            <person name="Rouze P."/>
            <person name="Ryaboy D."/>
            <person name="Schmutz J."/>
            <person name="Schrader J."/>
            <person name="Segerman B."/>
            <person name="Shin H."/>
            <person name="Siddiqui A."/>
            <person name="Sterky F."/>
            <person name="Terry A."/>
            <person name="Tsai C.-J."/>
            <person name="Uberbacher E."/>
            <person name="Unneberg P."/>
            <person name="Vahala J."/>
            <person name="Wall K."/>
            <person name="Wessler S."/>
            <person name="Yang G."/>
            <person name="Yin T."/>
            <person name="Douglas C."/>
            <person name="Marra M."/>
            <person name="Sandberg G."/>
            <person name="Van de Peer Y."/>
            <person name="Rokhsar D.S."/>
        </authorList>
    </citation>
    <scope>NUCLEOTIDE SEQUENCE [LARGE SCALE GENOMIC DNA]</scope>
    <source>
        <strain>cv. Nisqually</strain>
    </source>
</reference>
<sequence length="43" mass="4662">METATLVAISISGLLVSFTGYALYTAFGQPSQQLRDPFEEHGD</sequence>
<proteinExistence type="inferred from homology"/>
<geneLocation type="chloroplast"/>